<reference key="1">
    <citation type="journal article" date="2009" name="Nature">
        <title>Evolution of pathogenicity and sexual reproduction in eight Candida genomes.</title>
        <authorList>
            <person name="Butler G."/>
            <person name="Rasmussen M.D."/>
            <person name="Lin M.F."/>
            <person name="Santos M.A.S."/>
            <person name="Sakthikumar S."/>
            <person name="Munro C.A."/>
            <person name="Rheinbay E."/>
            <person name="Grabherr M."/>
            <person name="Forche A."/>
            <person name="Reedy J.L."/>
            <person name="Agrafioti I."/>
            <person name="Arnaud M.B."/>
            <person name="Bates S."/>
            <person name="Brown A.J.P."/>
            <person name="Brunke S."/>
            <person name="Costanzo M.C."/>
            <person name="Fitzpatrick D.A."/>
            <person name="de Groot P.W.J."/>
            <person name="Harris D."/>
            <person name="Hoyer L.L."/>
            <person name="Hube B."/>
            <person name="Klis F.M."/>
            <person name="Kodira C."/>
            <person name="Lennard N."/>
            <person name="Logue M.E."/>
            <person name="Martin R."/>
            <person name="Neiman A.M."/>
            <person name="Nikolaou E."/>
            <person name="Quail M.A."/>
            <person name="Quinn J."/>
            <person name="Santos M.C."/>
            <person name="Schmitzberger F.F."/>
            <person name="Sherlock G."/>
            <person name="Shah P."/>
            <person name="Silverstein K.A.T."/>
            <person name="Skrzypek M.S."/>
            <person name="Soll D."/>
            <person name="Staggs R."/>
            <person name="Stansfield I."/>
            <person name="Stumpf M.P.H."/>
            <person name="Sudbery P.E."/>
            <person name="Srikantha T."/>
            <person name="Zeng Q."/>
            <person name="Berman J."/>
            <person name="Berriman M."/>
            <person name="Heitman J."/>
            <person name="Gow N.A.R."/>
            <person name="Lorenz M.C."/>
            <person name="Birren B.W."/>
            <person name="Kellis M."/>
            <person name="Cuomo C.A."/>
        </authorList>
    </citation>
    <scope>NUCLEOTIDE SEQUENCE [LARGE SCALE GENOMIC DNA]</scope>
    <source>
        <strain>ATCC 11503 / BCRC 21390 / CBS 2605 / JCM 1781 / NBRC 1676 / NRRL YB-4239</strain>
    </source>
</reference>
<keyword id="KW-0067">ATP-binding</keyword>
<keyword id="KW-0175">Coiled coil</keyword>
<keyword id="KW-0347">Helicase</keyword>
<keyword id="KW-0378">Hydrolase</keyword>
<keyword id="KW-0547">Nucleotide-binding</keyword>
<keyword id="KW-0539">Nucleus</keyword>
<keyword id="KW-1185">Reference proteome</keyword>
<keyword id="KW-0690">Ribosome biogenesis</keyword>
<keyword id="KW-0694">RNA-binding</keyword>
<keyword id="KW-0698">rRNA processing</keyword>
<proteinExistence type="inferred from homology"/>
<feature type="chain" id="PRO_0000294668" description="ATP-dependent rRNA helicase SPB4">
    <location>
        <begin position="1"/>
        <end position="637"/>
    </location>
</feature>
<feature type="domain" description="Helicase ATP-binding" evidence="3">
    <location>
        <begin position="41"/>
        <end position="236"/>
    </location>
</feature>
<feature type="domain" description="Helicase C-terminal" evidence="4">
    <location>
        <begin position="266"/>
        <end position="444"/>
    </location>
</feature>
<feature type="region of interest" description="Disordered" evidence="5">
    <location>
        <begin position="554"/>
        <end position="637"/>
    </location>
</feature>
<feature type="coiled-coil region" evidence="2">
    <location>
        <begin position="528"/>
        <end position="597"/>
    </location>
</feature>
<feature type="short sequence motif" description="Q motif" evidence="6">
    <location>
        <begin position="10"/>
        <end position="38"/>
    </location>
</feature>
<feature type="short sequence motif" description="DEAD box" evidence="6">
    <location>
        <begin position="184"/>
        <end position="187"/>
    </location>
</feature>
<feature type="compositionally biased region" description="Basic and acidic residues" evidence="5">
    <location>
        <begin position="564"/>
        <end position="576"/>
    </location>
</feature>
<feature type="compositionally biased region" description="Basic and acidic residues" evidence="5">
    <location>
        <begin position="583"/>
        <end position="598"/>
    </location>
</feature>
<feature type="compositionally biased region" description="Gly residues" evidence="5">
    <location>
        <begin position="621"/>
        <end position="630"/>
    </location>
</feature>
<feature type="binding site" evidence="3">
    <location>
        <begin position="54"/>
        <end position="61"/>
    </location>
    <ligand>
        <name>ATP</name>
        <dbReference type="ChEBI" id="CHEBI:30616"/>
    </ligand>
</feature>
<accession>A5E2I8</accession>
<comment type="function">
    <text evidence="1">ATP-binding RNA helicase involved in the biogenesis of 60S ribosomal subunits. Binds 90S pre-ribosomal particles and dissociates from pre-60S ribosomal particles after processing of 27SB pre-rRNA. Required for the normal formation of 18S rRNA through the processing of pre-rRNAs at sites A0, A1 and A2, and the normal formation of 25S and 5.8S rRNAs through the processing of pre-rRNAs at sites C1 and C2.</text>
</comment>
<comment type="catalytic activity">
    <reaction evidence="1">
        <text>ATP + H2O = ADP + phosphate + H(+)</text>
        <dbReference type="Rhea" id="RHEA:13065"/>
        <dbReference type="ChEBI" id="CHEBI:15377"/>
        <dbReference type="ChEBI" id="CHEBI:15378"/>
        <dbReference type="ChEBI" id="CHEBI:30616"/>
        <dbReference type="ChEBI" id="CHEBI:43474"/>
        <dbReference type="ChEBI" id="CHEBI:456216"/>
        <dbReference type="EC" id="3.6.4.13"/>
    </reaction>
</comment>
<comment type="subunit">
    <text evidence="1">Component of pre-60S ribosomal complexes.</text>
</comment>
<comment type="subcellular location">
    <subcellularLocation>
        <location evidence="1">Nucleus</location>
        <location evidence="1">Nucleolus</location>
    </subcellularLocation>
</comment>
<comment type="domain">
    <text>The Q motif is unique to and characteristic of the DEAD box family of RNA helicases and controls ATP binding and hydrolysis.</text>
</comment>
<comment type="similarity">
    <text evidence="6">Belongs to the DEAD box helicase family. DDX55/SPB4 subfamily.</text>
</comment>
<gene>
    <name evidence="1" type="primary">SPB4</name>
    <name type="ORF">LELG_03825</name>
</gene>
<evidence type="ECO:0000250" key="1">
    <source>
        <dbReference type="UniProtKB" id="P25808"/>
    </source>
</evidence>
<evidence type="ECO:0000255" key="2"/>
<evidence type="ECO:0000255" key="3">
    <source>
        <dbReference type="PROSITE-ProRule" id="PRU00541"/>
    </source>
</evidence>
<evidence type="ECO:0000255" key="4">
    <source>
        <dbReference type="PROSITE-ProRule" id="PRU00542"/>
    </source>
</evidence>
<evidence type="ECO:0000256" key="5">
    <source>
        <dbReference type="SAM" id="MobiDB-lite"/>
    </source>
</evidence>
<evidence type="ECO:0000305" key="6"/>
<name>SPB4_LODEL</name>
<protein>
    <recommendedName>
        <fullName evidence="6">ATP-dependent rRNA helicase SPB4</fullName>
        <ecNumber evidence="1">3.6.4.13</ecNumber>
    </recommendedName>
</protein>
<organism>
    <name type="scientific">Lodderomyces elongisporus (strain ATCC 11503 / CBS 2605 / JCM 1781 / NBRC 1676 / NRRL YB-4239)</name>
    <name type="common">Yeast</name>
    <name type="synonym">Saccharomyces elongisporus</name>
    <dbReference type="NCBI Taxonomy" id="379508"/>
    <lineage>
        <taxon>Eukaryota</taxon>
        <taxon>Fungi</taxon>
        <taxon>Dikarya</taxon>
        <taxon>Ascomycota</taxon>
        <taxon>Saccharomycotina</taxon>
        <taxon>Pichiomycetes</taxon>
        <taxon>Debaryomycetaceae</taxon>
        <taxon>Candida/Lodderomyces clade</taxon>
        <taxon>Lodderomyces</taxon>
    </lineage>
</organism>
<dbReference type="EC" id="3.6.4.13" evidence="1"/>
<dbReference type="EMBL" id="CH981528">
    <property type="protein sequence ID" value="EDK45646.1"/>
    <property type="molecule type" value="Genomic_DNA"/>
</dbReference>
<dbReference type="RefSeq" id="XP_001524793.1">
    <property type="nucleotide sequence ID" value="XM_001524743.1"/>
</dbReference>
<dbReference type="SMR" id="A5E2I8"/>
<dbReference type="FunCoup" id="A5E2I8">
    <property type="interactions" value="1163"/>
</dbReference>
<dbReference type="STRING" id="379508.A5E2I8"/>
<dbReference type="GeneID" id="5232190"/>
<dbReference type="KEGG" id="lel:PVL30_004648"/>
<dbReference type="VEuPathDB" id="FungiDB:LELG_03825"/>
<dbReference type="eggNOG" id="KOG0345">
    <property type="taxonomic scope" value="Eukaryota"/>
</dbReference>
<dbReference type="HOGENOM" id="CLU_003041_26_4_1"/>
<dbReference type="InParanoid" id="A5E2I8"/>
<dbReference type="OMA" id="AYKEHEC"/>
<dbReference type="OrthoDB" id="7396459at2759"/>
<dbReference type="Proteomes" id="UP000001996">
    <property type="component" value="Unassembled WGS sequence"/>
</dbReference>
<dbReference type="GO" id="GO:0030686">
    <property type="term" value="C:90S preribosome"/>
    <property type="evidence" value="ECO:0007669"/>
    <property type="project" value="EnsemblFungi"/>
</dbReference>
<dbReference type="GO" id="GO:0005730">
    <property type="term" value="C:nucleolus"/>
    <property type="evidence" value="ECO:0007669"/>
    <property type="project" value="UniProtKB-SubCell"/>
</dbReference>
<dbReference type="GO" id="GO:0005654">
    <property type="term" value="C:nucleoplasm"/>
    <property type="evidence" value="ECO:0007669"/>
    <property type="project" value="EnsemblFungi"/>
</dbReference>
<dbReference type="GO" id="GO:0030687">
    <property type="term" value="C:preribosome, large subunit precursor"/>
    <property type="evidence" value="ECO:0007669"/>
    <property type="project" value="EnsemblFungi"/>
</dbReference>
<dbReference type="GO" id="GO:0005524">
    <property type="term" value="F:ATP binding"/>
    <property type="evidence" value="ECO:0007669"/>
    <property type="project" value="UniProtKB-KW"/>
</dbReference>
<dbReference type="GO" id="GO:0016887">
    <property type="term" value="F:ATP hydrolysis activity"/>
    <property type="evidence" value="ECO:0007669"/>
    <property type="project" value="RHEA"/>
</dbReference>
<dbReference type="GO" id="GO:0003723">
    <property type="term" value="F:RNA binding"/>
    <property type="evidence" value="ECO:0007669"/>
    <property type="project" value="UniProtKB-KW"/>
</dbReference>
<dbReference type="GO" id="GO:0003724">
    <property type="term" value="F:RNA helicase activity"/>
    <property type="evidence" value="ECO:0007669"/>
    <property type="project" value="UniProtKB-EC"/>
</dbReference>
<dbReference type="GO" id="GO:1902626">
    <property type="term" value="P:assembly of large subunit precursor of preribosome"/>
    <property type="evidence" value="ECO:0007669"/>
    <property type="project" value="EnsemblFungi"/>
</dbReference>
<dbReference type="GO" id="GO:0000470">
    <property type="term" value="P:maturation of LSU-rRNA"/>
    <property type="evidence" value="ECO:0007669"/>
    <property type="project" value="EnsemblFungi"/>
</dbReference>
<dbReference type="CDD" id="cd17960">
    <property type="entry name" value="DEADc_DDX55"/>
    <property type="match status" value="1"/>
</dbReference>
<dbReference type="CDD" id="cd18787">
    <property type="entry name" value="SF2_C_DEAD"/>
    <property type="match status" value="1"/>
</dbReference>
<dbReference type="Gene3D" id="3.40.50.300">
    <property type="entry name" value="P-loop containing nucleotide triphosphate hydrolases"/>
    <property type="match status" value="2"/>
</dbReference>
<dbReference type="InterPro" id="IPR056330">
    <property type="entry name" value="CTT_SPB4"/>
</dbReference>
<dbReference type="InterPro" id="IPR011545">
    <property type="entry name" value="DEAD/DEAH_box_helicase_dom"/>
</dbReference>
<dbReference type="InterPro" id="IPR014001">
    <property type="entry name" value="Helicase_ATP-bd"/>
</dbReference>
<dbReference type="InterPro" id="IPR001650">
    <property type="entry name" value="Helicase_C-like"/>
</dbReference>
<dbReference type="InterPro" id="IPR027417">
    <property type="entry name" value="P-loop_NTPase"/>
</dbReference>
<dbReference type="InterPro" id="IPR000629">
    <property type="entry name" value="RNA-helicase_DEAD-box_CS"/>
</dbReference>
<dbReference type="InterPro" id="IPR014014">
    <property type="entry name" value="RNA_helicase_DEAD_Q_motif"/>
</dbReference>
<dbReference type="InterPro" id="IPR025313">
    <property type="entry name" value="SPB4-like_CTE"/>
</dbReference>
<dbReference type="PANTHER" id="PTHR24031">
    <property type="entry name" value="RNA HELICASE"/>
    <property type="match status" value="1"/>
</dbReference>
<dbReference type="Pfam" id="PF13959">
    <property type="entry name" value="CTE_SPB4"/>
    <property type="match status" value="1"/>
</dbReference>
<dbReference type="Pfam" id="PF23681">
    <property type="entry name" value="CTT_SPB4"/>
    <property type="match status" value="1"/>
</dbReference>
<dbReference type="Pfam" id="PF00270">
    <property type="entry name" value="DEAD"/>
    <property type="match status" value="1"/>
</dbReference>
<dbReference type="Pfam" id="PF00271">
    <property type="entry name" value="Helicase_C"/>
    <property type="match status" value="1"/>
</dbReference>
<dbReference type="SMART" id="SM00487">
    <property type="entry name" value="DEXDc"/>
    <property type="match status" value="1"/>
</dbReference>
<dbReference type="SMART" id="SM01178">
    <property type="entry name" value="DUF4217"/>
    <property type="match status" value="1"/>
</dbReference>
<dbReference type="SMART" id="SM00490">
    <property type="entry name" value="HELICc"/>
    <property type="match status" value="1"/>
</dbReference>
<dbReference type="SUPFAM" id="SSF52540">
    <property type="entry name" value="P-loop containing nucleoside triphosphate hydrolases"/>
    <property type="match status" value="1"/>
</dbReference>
<dbReference type="PROSITE" id="PS00039">
    <property type="entry name" value="DEAD_ATP_HELICASE"/>
    <property type="match status" value="1"/>
</dbReference>
<dbReference type="PROSITE" id="PS51192">
    <property type="entry name" value="HELICASE_ATP_BIND_1"/>
    <property type="match status" value="1"/>
</dbReference>
<dbReference type="PROSITE" id="PS51194">
    <property type="entry name" value="HELICASE_CTER"/>
    <property type="match status" value="1"/>
</dbReference>
<dbReference type="PROSITE" id="PS51195">
    <property type="entry name" value="Q_MOTIF"/>
    <property type="match status" value="1"/>
</dbReference>
<sequence>MQTNKGSLLWENLRVDLEPWLKDAIRSLNYPTMTPVQASTIPLLSGNKDVIVEAVTGSGKTLAFAIPVLQKVSKRLYQVPEGEEKPEPVKRGHMLAIVMAPTRELAKQIQMVFDKVLELLPEEDSYEPRIKTQLLVGFLGNVREDLDSYQENRPQILIATPGRLLDFMSLQIVKTSSLEIVILDEADKLLDMSFETDVIKILKMLPKQRRTGLFSATISAAGDTIFRTGMNNPVKLQVKTKNFLGEQNNAPTSLQLSYMMIEPEHKLTTMLQMLRDNQFKKAIVYFPTCTSVKHFYQMLSKLCKSSANDIDISALLFFSLHGQLTTKSRLNTLEKFTEGNDESKKYILMATDVAARGIDIPDVDLVIQIDPPTDPSVFLHRCGRTGRANKVGRAIVMLNNDTQEEDYVGFMEVKSVFMTKIDPPEDKDNHSFHNKFQKKLRKYMLEDRARHELAVKSYVGFVRYYSKHIASLIFRLASLDYIAIAKMYGLLRLPKMPESRYIENEKMPEDGWLGEVVDMDTYAYLDKSAEKARLENLEKDKLAKAENAKRRKELKVKNEAWSSKTEKRETKLERKEKMKRKREAIEKQLEAEQERGGLDEEEVKEDWKDLVRKNKKKQKSNGGGGGGGVLQGSFDDL</sequence>